<organism>
    <name type="scientific">Methanosarcina acetivorans (strain ATCC 35395 / DSM 2834 / JCM 12185 / C2A)</name>
    <dbReference type="NCBI Taxonomy" id="188937"/>
    <lineage>
        <taxon>Archaea</taxon>
        <taxon>Methanobacteriati</taxon>
        <taxon>Methanobacteriota</taxon>
        <taxon>Stenosarchaea group</taxon>
        <taxon>Methanomicrobia</taxon>
        <taxon>Methanosarcinales</taxon>
        <taxon>Methanosarcinaceae</taxon>
        <taxon>Methanosarcina</taxon>
    </lineage>
</organism>
<reference key="1">
    <citation type="journal article" date="2002" name="Genome Res.">
        <title>The genome of Methanosarcina acetivorans reveals extensive metabolic and physiological diversity.</title>
        <authorList>
            <person name="Galagan J.E."/>
            <person name="Nusbaum C."/>
            <person name="Roy A."/>
            <person name="Endrizzi M.G."/>
            <person name="Macdonald P."/>
            <person name="FitzHugh W."/>
            <person name="Calvo S."/>
            <person name="Engels R."/>
            <person name="Smirnov S."/>
            <person name="Atnoor D."/>
            <person name="Brown A."/>
            <person name="Allen N."/>
            <person name="Naylor J."/>
            <person name="Stange-Thomann N."/>
            <person name="DeArellano K."/>
            <person name="Johnson R."/>
            <person name="Linton L."/>
            <person name="McEwan P."/>
            <person name="McKernan K."/>
            <person name="Talamas J."/>
            <person name="Tirrell A."/>
            <person name="Ye W."/>
            <person name="Zimmer A."/>
            <person name="Barber R.D."/>
            <person name="Cann I."/>
            <person name="Graham D.E."/>
            <person name="Grahame D.A."/>
            <person name="Guss A.M."/>
            <person name="Hedderich R."/>
            <person name="Ingram-Smith C."/>
            <person name="Kuettner H.C."/>
            <person name="Krzycki J.A."/>
            <person name="Leigh J.A."/>
            <person name="Li W."/>
            <person name="Liu J."/>
            <person name="Mukhopadhyay B."/>
            <person name="Reeve J.N."/>
            <person name="Smith K."/>
            <person name="Springer T.A."/>
            <person name="Umayam L.A."/>
            <person name="White O."/>
            <person name="White R.H."/>
            <person name="de Macario E.C."/>
            <person name="Ferry J.G."/>
            <person name="Jarrell K.F."/>
            <person name="Jing H."/>
            <person name="Macario A.J.L."/>
            <person name="Paulsen I.T."/>
            <person name="Pritchett M."/>
            <person name="Sowers K.R."/>
            <person name="Swanson R.V."/>
            <person name="Zinder S.H."/>
            <person name="Lander E."/>
            <person name="Metcalf W.W."/>
            <person name="Birren B."/>
        </authorList>
    </citation>
    <scope>NUCLEOTIDE SEQUENCE [LARGE SCALE GENOMIC DNA]</scope>
    <source>
        <strain>ATCC 35395 / DSM 2834 / JCM 12185 / C2A</strain>
    </source>
</reference>
<feature type="chain" id="PRO_0000141517" description="4-hydroxy-tetrahydrodipicolinate reductase">
    <location>
        <begin position="1"/>
        <end position="263"/>
    </location>
</feature>
<feature type="active site" description="Proton donor/acceptor" evidence="1">
    <location>
        <position position="157"/>
    </location>
</feature>
<feature type="active site" description="Proton donor" evidence="1">
    <location>
        <position position="161"/>
    </location>
</feature>
<feature type="binding site" evidence="1">
    <location>
        <begin position="8"/>
        <end position="13"/>
    </location>
    <ligand>
        <name>NAD(+)</name>
        <dbReference type="ChEBI" id="CHEBI:57540"/>
    </ligand>
</feature>
<feature type="binding site" evidence="1">
    <location>
        <position position="34"/>
    </location>
    <ligand>
        <name>NAD(+)</name>
        <dbReference type="ChEBI" id="CHEBI:57540"/>
    </ligand>
</feature>
<feature type="binding site" evidence="1">
    <location>
        <begin position="99"/>
        <end position="101"/>
    </location>
    <ligand>
        <name>NAD(+)</name>
        <dbReference type="ChEBI" id="CHEBI:57540"/>
    </ligand>
</feature>
<feature type="binding site" evidence="1">
    <location>
        <begin position="125"/>
        <end position="128"/>
    </location>
    <ligand>
        <name>NAD(+)</name>
        <dbReference type="ChEBI" id="CHEBI:57540"/>
    </ligand>
</feature>
<feature type="binding site" evidence="1">
    <location>
        <position position="158"/>
    </location>
    <ligand>
        <name>(S)-2,3,4,5-tetrahydrodipicolinate</name>
        <dbReference type="ChEBI" id="CHEBI:16845"/>
    </ligand>
</feature>
<feature type="binding site" evidence="1">
    <location>
        <begin position="167"/>
        <end position="168"/>
    </location>
    <ligand>
        <name>(S)-2,3,4,5-tetrahydrodipicolinate</name>
        <dbReference type="ChEBI" id="CHEBI:16845"/>
    </ligand>
</feature>
<evidence type="ECO:0000255" key="1">
    <source>
        <dbReference type="HAMAP-Rule" id="MF_00102"/>
    </source>
</evidence>
<evidence type="ECO:0000305" key="2"/>
<accession>Q8THP0</accession>
<sequence length="263" mass="28027">MINAAVLGACGRMGSLIIENITCSTDMQLVAAFDIGSIGKDAGEFAHVSNLGIQISDVKDLETVLKKTQADVLIDFTAAGATIVNAPIAAGCGVNLIIGTTGLTPEQRKVIDETIQKNKVRAVISPNYSVGVNVFFKIVREAAKYLSDYDIEIIEAHHNQKKDAPSGTALRAADVISEALGGKEYVCGREGIAPRGKEIGIHAVRGGDITGDHTVLFVGNSERIEIRHMAHSRQIFAKGAVRAAEWICKQEPGIYSMDDVLGL</sequence>
<name>DAPB_METAC</name>
<comment type="function">
    <text evidence="1">Catalyzes the conversion of 4-hydroxy-tetrahydrodipicolinate (HTPA) to tetrahydrodipicolinate.</text>
</comment>
<comment type="catalytic activity">
    <reaction evidence="1">
        <text>(S)-2,3,4,5-tetrahydrodipicolinate + NAD(+) + H2O = (2S,4S)-4-hydroxy-2,3,4,5-tetrahydrodipicolinate + NADH + H(+)</text>
        <dbReference type="Rhea" id="RHEA:35323"/>
        <dbReference type="ChEBI" id="CHEBI:15377"/>
        <dbReference type="ChEBI" id="CHEBI:15378"/>
        <dbReference type="ChEBI" id="CHEBI:16845"/>
        <dbReference type="ChEBI" id="CHEBI:57540"/>
        <dbReference type="ChEBI" id="CHEBI:57945"/>
        <dbReference type="ChEBI" id="CHEBI:67139"/>
        <dbReference type="EC" id="1.17.1.8"/>
    </reaction>
</comment>
<comment type="catalytic activity">
    <reaction evidence="1">
        <text>(S)-2,3,4,5-tetrahydrodipicolinate + NADP(+) + H2O = (2S,4S)-4-hydroxy-2,3,4,5-tetrahydrodipicolinate + NADPH + H(+)</text>
        <dbReference type="Rhea" id="RHEA:35331"/>
        <dbReference type="ChEBI" id="CHEBI:15377"/>
        <dbReference type="ChEBI" id="CHEBI:15378"/>
        <dbReference type="ChEBI" id="CHEBI:16845"/>
        <dbReference type="ChEBI" id="CHEBI:57783"/>
        <dbReference type="ChEBI" id="CHEBI:58349"/>
        <dbReference type="ChEBI" id="CHEBI:67139"/>
        <dbReference type="EC" id="1.17.1.8"/>
    </reaction>
</comment>
<comment type="pathway">
    <text evidence="1">Amino-acid biosynthesis; L-lysine biosynthesis via DAP pathway; (S)-tetrahydrodipicolinate from L-aspartate: step 4/4.</text>
</comment>
<comment type="subcellular location">
    <subcellularLocation>
        <location evidence="1">Cytoplasm</location>
    </subcellularLocation>
</comment>
<comment type="similarity">
    <text evidence="1">Belongs to the DapB family.</text>
</comment>
<comment type="caution">
    <text evidence="2">Was originally thought to be a dihydrodipicolinate reductase (DHDPR), catalyzing the conversion of dihydrodipicolinate to tetrahydrodipicolinate. However, it was shown in E.coli that the substrate of the enzymatic reaction is not dihydrodipicolinate (DHDP) but in fact (2S,4S)-4-hydroxy-2,3,4,5-tetrahydrodipicolinic acid (HTPA), the product released by the DapA-catalyzed reaction.</text>
</comment>
<gene>
    <name evidence="1" type="primary">dapB</name>
    <name type="ordered locus">MA_4474</name>
</gene>
<protein>
    <recommendedName>
        <fullName evidence="1">4-hydroxy-tetrahydrodipicolinate reductase</fullName>
        <shortName evidence="1">HTPA reductase</shortName>
        <ecNumber evidence="1">1.17.1.8</ecNumber>
    </recommendedName>
</protein>
<keyword id="KW-0028">Amino-acid biosynthesis</keyword>
<keyword id="KW-0963">Cytoplasm</keyword>
<keyword id="KW-0220">Diaminopimelate biosynthesis</keyword>
<keyword id="KW-0457">Lysine biosynthesis</keyword>
<keyword id="KW-0520">NAD</keyword>
<keyword id="KW-0521">NADP</keyword>
<keyword id="KW-0560">Oxidoreductase</keyword>
<keyword id="KW-1185">Reference proteome</keyword>
<proteinExistence type="inferred from homology"/>
<dbReference type="EC" id="1.17.1.8" evidence="1"/>
<dbReference type="EMBL" id="AE010299">
    <property type="protein sequence ID" value="AAM07814.1"/>
    <property type="molecule type" value="Genomic_DNA"/>
</dbReference>
<dbReference type="RefSeq" id="WP_011024350.1">
    <property type="nucleotide sequence ID" value="NC_003552.1"/>
</dbReference>
<dbReference type="SMR" id="Q8THP0"/>
<dbReference type="FunCoup" id="Q8THP0">
    <property type="interactions" value="90"/>
</dbReference>
<dbReference type="STRING" id="188937.MA_4474"/>
<dbReference type="EnsemblBacteria" id="AAM07814">
    <property type="protein sequence ID" value="AAM07814"/>
    <property type="gene ID" value="MA_4474"/>
</dbReference>
<dbReference type="GeneID" id="1476368"/>
<dbReference type="KEGG" id="mac:MA_4474"/>
<dbReference type="HOGENOM" id="CLU_047479_2_1_2"/>
<dbReference type="InParanoid" id="Q8THP0"/>
<dbReference type="OrthoDB" id="195035at2157"/>
<dbReference type="PhylomeDB" id="Q8THP0"/>
<dbReference type="UniPathway" id="UPA00034">
    <property type="reaction ID" value="UER00018"/>
</dbReference>
<dbReference type="Proteomes" id="UP000002487">
    <property type="component" value="Chromosome"/>
</dbReference>
<dbReference type="GO" id="GO:0005737">
    <property type="term" value="C:cytoplasm"/>
    <property type="evidence" value="ECO:0007669"/>
    <property type="project" value="UniProtKB-SubCell"/>
</dbReference>
<dbReference type="GO" id="GO:0008839">
    <property type="term" value="F:4-hydroxy-tetrahydrodipicolinate reductase"/>
    <property type="evidence" value="ECO:0000318"/>
    <property type="project" value="GO_Central"/>
</dbReference>
<dbReference type="GO" id="GO:0051287">
    <property type="term" value="F:NAD binding"/>
    <property type="evidence" value="ECO:0007669"/>
    <property type="project" value="UniProtKB-UniRule"/>
</dbReference>
<dbReference type="GO" id="GO:0050661">
    <property type="term" value="F:NADP binding"/>
    <property type="evidence" value="ECO:0007669"/>
    <property type="project" value="UniProtKB-UniRule"/>
</dbReference>
<dbReference type="GO" id="GO:0016726">
    <property type="term" value="F:oxidoreductase activity, acting on CH or CH2 groups, NAD or NADP as acceptor"/>
    <property type="evidence" value="ECO:0007669"/>
    <property type="project" value="UniProtKB-UniRule"/>
</dbReference>
<dbReference type="GO" id="GO:0019877">
    <property type="term" value="P:diaminopimelate biosynthetic process"/>
    <property type="evidence" value="ECO:0000318"/>
    <property type="project" value="GO_Central"/>
</dbReference>
<dbReference type="GO" id="GO:0009089">
    <property type="term" value="P:lysine biosynthetic process via diaminopimelate"/>
    <property type="evidence" value="ECO:0007669"/>
    <property type="project" value="UniProtKB-UniRule"/>
</dbReference>
<dbReference type="CDD" id="cd02274">
    <property type="entry name" value="DHDPR_N"/>
    <property type="match status" value="1"/>
</dbReference>
<dbReference type="FunFam" id="3.30.360.10:FF:000004">
    <property type="entry name" value="4-hydroxy-tetrahydrodipicolinate reductase"/>
    <property type="match status" value="1"/>
</dbReference>
<dbReference type="Gene3D" id="3.30.360.10">
    <property type="entry name" value="Dihydrodipicolinate Reductase, domain 2"/>
    <property type="match status" value="1"/>
</dbReference>
<dbReference type="Gene3D" id="3.40.50.720">
    <property type="entry name" value="NAD(P)-binding Rossmann-like Domain"/>
    <property type="match status" value="1"/>
</dbReference>
<dbReference type="HAMAP" id="MF_00102">
    <property type="entry name" value="DapB"/>
    <property type="match status" value="1"/>
</dbReference>
<dbReference type="InterPro" id="IPR022663">
    <property type="entry name" value="DapB_C"/>
</dbReference>
<dbReference type="InterPro" id="IPR000846">
    <property type="entry name" value="DapB_N"/>
</dbReference>
<dbReference type="InterPro" id="IPR022664">
    <property type="entry name" value="DapB_N_CS"/>
</dbReference>
<dbReference type="InterPro" id="IPR023940">
    <property type="entry name" value="DHDPR_bac"/>
</dbReference>
<dbReference type="InterPro" id="IPR036291">
    <property type="entry name" value="NAD(P)-bd_dom_sf"/>
</dbReference>
<dbReference type="NCBIfam" id="TIGR00036">
    <property type="entry name" value="dapB"/>
    <property type="match status" value="1"/>
</dbReference>
<dbReference type="PANTHER" id="PTHR20836:SF0">
    <property type="entry name" value="4-HYDROXY-TETRAHYDRODIPICOLINATE REDUCTASE 1, CHLOROPLASTIC-RELATED"/>
    <property type="match status" value="1"/>
</dbReference>
<dbReference type="PANTHER" id="PTHR20836">
    <property type="entry name" value="DIHYDRODIPICOLINATE REDUCTASE"/>
    <property type="match status" value="1"/>
</dbReference>
<dbReference type="Pfam" id="PF05173">
    <property type="entry name" value="DapB_C"/>
    <property type="match status" value="1"/>
</dbReference>
<dbReference type="Pfam" id="PF01113">
    <property type="entry name" value="DapB_N"/>
    <property type="match status" value="1"/>
</dbReference>
<dbReference type="PIRSF" id="PIRSF000161">
    <property type="entry name" value="DHPR"/>
    <property type="match status" value="1"/>
</dbReference>
<dbReference type="SUPFAM" id="SSF55347">
    <property type="entry name" value="Glyceraldehyde-3-phosphate dehydrogenase-like, C-terminal domain"/>
    <property type="match status" value="1"/>
</dbReference>
<dbReference type="SUPFAM" id="SSF51735">
    <property type="entry name" value="NAD(P)-binding Rossmann-fold domains"/>
    <property type="match status" value="1"/>
</dbReference>
<dbReference type="PROSITE" id="PS01298">
    <property type="entry name" value="DAPB"/>
    <property type="match status" value="1"/>
</dbReference>